<gene>
    <name type="primary">MSX2</name>
</gene>
<evidence type="ECO:0000250" key="1"/>
<evidence type="ECO:0000255" key="2">
    <source>
        <dbReference type="PROSITE-ProRule" id="PRU00108"/>
    </source>
</evidence>
<evidence type="ECO:0000256" key="3">
    <source>
        <dbReference type="SAM" id="MobiDB-lite"/>
    </source>
</evidence>
<evidence type="ECO:0000305" key="4"/>
<feature type="chain" id="PRO_0000285450" description="Homeobox protein MSX-2">
    <location>
        <begin position="1"/>
        <end position="267"/>
    </location>
</feature>
<feature type="DNA-binding region" description="Homeobox" evidence="2">
    <location>
        <begin position="142"/>
        <end position="201"/>
    </location>
</feature>
<feature type="region of interest" description="Disordered" evidence="3">
    <location>
        <begin position="1"/>
        <end position="71"/>
    </location>
</feature>
<feature type="region of interest" description="Disordered" evidence="3">
    <location>
        <begin position="116"/>
        <end position="147"/>
    </location>
</feature>
<feature type="compositionally biased region" description="Low complexity" evidence="3">
    <location>
        <begin position="62"/>
        <end position="71"/>
    </location>
</feature>
<feature type="compositionally biased region" description="Basic residues" evidence="3">
    <location>
        <begin position="136"/>
        <end position="146"/>
    </location>
</feature>
<sequence length="267" mass="28897">MASPSKGNDLFSPDEEGPAVVAGPGPGPGGAEGAAEERRVKVSSLPFSVEALMSDKKPPKEASPLPAESASAGATLRPLLLSGHGAREAHSPGPLVKPFETASVKSENSEDGAAWMQEPGRYSPPPRHMSPTTCTLRKHKTNRKPRTPFTTSQLLALERKFRQKQYLSIAERAEFSSSLNLTETQVKIWFQNRRAKAKRLQEAELEKLKMAAKPMLPSSFSLPFPISSPLQAASIYGASYPFHRPVLPIPPVGLYATPVGYGMYHLS</sequence>
<organism>
    <name type="scientific">Pan paniscus</name>
    <name type="common">Pygmy chimpanzee</name>
    <name type="synonym">Bonobo</name>
    <dbReference type="NCBI Taxonomy" id="9597"/>
    <lineage>
        <taxon>Eukaryota</taxon>
        <taxon>Metazoa</taxon>
        <taxon>Chordata</taxon>
        <taxon>Craniata</taxon>
        <taxon>Vertebrata</taxon>
        <taxon>Euteleostomi</taxon>
        <taxon>Mammalia</taxon>
        <taxon>Eutheria</taxon>
        <taxon>Euarchontoglires</taxon>
        <taxon>Primates</taxon>
        <taxon>Haplorrhini</taxon>
        <taxon>Catarrhini</taxon>
        <taxon>Hominidae</taxon>
        <taxon>Pan</taxon>
    </lineage>
</organism>
<accession>A1YG93</accession>
<keyword id="KW-0217">Developmental protein</keyword>
<keyword id="KW-0238">DNA-binding</keyword>
<keyword id="KW-0371">Homeobox</keyword>
<keyword id="KW-0539">Nucleus</keyword>
<keyword id="KW-0892">Osteogenesis</keyword>
<keyword id="KW-1185">Reference proteome</keyword>
<keyword id="KW-0678">Repressor</keyword>
<keyword id="KW-0804">Transcription</keyword>
<keyword id="KW-0805">Transcription regulation</keyword>
<protein>
    <recommendedName>
        <fullName>Homeobox protein MSX-2</fullName>
    </recommendedName>
</protein>
<reference key="1">
    <citation type="submission" date="2006-08" db="EMBL/GenBank/DDBJ databases">
        <title>Positive selection in transcription factor genes on the human lineage.</title>
        <authorList>
            <person name="Nickel G.C."/>
            <person name="Tefft D.L."/>
            <person name="Trevarthen K."/>
            <person name="Funt J."/>
            <person name="Adams M.D."/>
        </authorList>
    </citation>
    <scope>NUCLEOTIDE SEQUENCE [GENOMIC DNA]</scope>
</reference>
<proteinExistence type="inferred from homology"/>
<name>MSX2_PANPA</name>
<comment type="function">
    <text evidence="1">Acts as a transcriptional regulator in bone development. Represses the ALPL promoter activity and antagonizes the stimulatory effect of DLX5 on ALPL expression during osteoblast differentiation. Probable morphogenetic role. May play a role in limb-pattern formation. In osteoblasts, suppresses transcription driven by the osteocalcin FGF response element (OCFRE). Binds to the homeodomain-response element of the ALPL promoter (By similarity).</text>
</comment>
<comment type="subunit">
    <text evidence="1">Interacts with MINT, with XRCC6 (Ku70) and XRCC5 (Ku80).</text>
</comment>
<comment type="subcellular location">
    <subcellularLocation>
        <location evidence="2">Nucleus</location>
    </subcellularLocation>
</comment>
<comment type="similarity">
    <text evidence="4">Belongs to the Msh homeobox family.</text>
</comment>
<dbReference type="EMBL" id="DQ977240">
    <property type="protein sequence ID" value="ABM54318.1"/>
    <property type="molecule type" value="Genomic_DNA"/>
</dbReference>
<dbReference type="RefSeq" id="XP_003814060.1">
    <property type="nucleotide sequence ID" value="XM_003814012.5"/>
</dbReference>
<dbReference type="SMR" id="A1YG93"/>
<dbReference type="STRING" id="9597.ENSPPAP00000002969"/>
<dbReference type="Ensembl" id="ENSPPAT00000013851.1">
    <property type="protein sequence ID" value="ENSPPAP00000002969.1"/>
    <property type="gene ID" value="ENSPPAG00000012688.1"/>
</dbReference>
<dbReference type="GeneID" id="100987321"/>
<dbReference type="KEGG" id="pps:100987321"/>
<dbReference type="CTD" id="4488"/>
<dbReference type="eggNOG" id="KOG0492">
    <property type="taxonomic scope" value="Eukaryota"/>
</dbReference>
<dbReference type="GeneTree" id="ENSGT00940000159824"/>
<dbReference type="OMA" id="PVGYNMY"/>
<dbReference type="OrthoDB" id="15061at9604"/>
<dbReference type="Proteomes" id="UP000240080">
    <property type="component" value="Chromosome 5"/>
</dbReference>
<dbReference type="Bgee" id="ENSPPAG00000012688">
    <property type="expression patterns" value="Expressed in placenta and 2 other cell types or tissues"/>
</dbReference>
<dbReference type="GO" id="GO:0005829">
    <property type="term" value="C:cytosol"/>
    <property type="evidence" value="ECO:0007669"/>
    <property type="project" value="Ensembl"/>
</dbReference>
<dbReference type="GO" id="GO:0016607">
    <property type="term" value="C:nuclear speck"/>
    <property type="evidence" value="ECO:0007669"/>
    <property type="project" value="Ensembl"/>
</dbReference>
<dbReference type="GO" id="GO:0000981">
    <property type="term" value="F:DNA-binding transcription factor activity, RNA polymerase II-specific"/>
    <property type="evidence" value="ECO:0007669"/>
    <property type="project" value="InterPro"/>
</dbReference>
<dbReference type="GO" id="GO:0000977">
    <property type="term" value="F:RNA polymerase II transcription regulatory region sequence-specific DNA binding"/>
    <property type="evidence" value="ECO:0007669"/>
    <property type="project" value="TreeGrafter"/>
</dbReference>
<dbReference type="GO" id="GO:0000976">
    <property type="term" value="F:transcription cis-regulatory region binding"/>
    <property type="evidence" value="ECO:0000250"/>
    <property type="project" value="UniProtKB"/>
</dbReference>
<dbReference type="GO" id="GO:0048598">
    <property type="term" value="P:embryonic morphogenesis"/>
    <property type="evidence" value="ECO:0007669"/>
    <property type="project" value="TreeGrafter"/>
</dbReference>
<dbReference type="GO" id="GO:0045892">
    <property type="term" value="P:negative regulation of DNA-templated transcription"/>
    <property type="evidence" value="ECO:0000250"/>
    <property type="project" value="UniProtKB"/>
</dbReference>
<dbReference type="GO" id="GO:0000122">
    <property type="term" value="P:negative regulation of transcription by RNA polymerase II"/>
    <property type="evidence" value="ECO:0007669"/>
    <property type="project" value="Ensembl"/>
</dbReference>
<dbReference type="GO" id="GO:0001649">
    <property type="term" value="P:osteoblast differentiation"/>
    <property type="evidence" value="ECO:0000250"/>
    <property type="project" value="UniProtKB"/>
</dbReference>
<dbReference type="CDD" id="cd00086">
    <property type="entry name" value="homeodomain"/>
    <property type="match status" value="1"/>
</dbReference>
<dbReference type="FunFam" id="1.10.10.60:FF:000134">
    <property type="entry name" value="Homeobox protein MSX-1"/>
    <property type="match status" value="1"/>
</dbReference>
<dbReference type="Gene3D" id="1.10.10.60">
    <property type="entry name" value="Homeodomain-like"/>
    <property type="match status" value="1"/>
</dbReference>
<dbReference type="InterPro" id="IPR001356">
    <property type="entry name" value="HD"/>
</dbReference>
<dbReference type="InterPro" id="IPR020479">
    <property type="entry name" value="HD_metazoa"/>
</dbReference>
<dbReference type="InterPro" id="IPR017970">
    <property type="entry name" value="Homeobox_CS"/>
</dbReference>
<dbReference type="InterPro" id="IPR009057">
    <property type="entry name" value="Homeodomain-like_sf"/>
</dbReference>
<dbReference type="InterPro" id="IPR050674">
    <property type="entry name" value="Msh_Homeobox_Regulators"/>
</dbReference>
<dbReference type="PANTHER" id="PTHR24338">
    <property type="entry name" value="HOMEOBOX PROTEIN MSX"/>
    <property type="match status" value="1"/>
</dbReference>
<dbReference type="PANTHER" id="PTHR24338:SF10">
    <property type="entry name" value="HOMEOBOX PROTEIN MSX-2"/>
    <property type="match status" value="1"/>
</dbReference>
<dbReference type="Pfam" id="PF00046">
    <property type="entry name" value="Homeodomain"/>
    <property type="match status" value="1"/>
</dbReference>
<dbReference type="PRINTS" id="PR00024">
    <property type="entry name" value="HOMEOBOX"/>
</dbReference>
<dbReference type="SMART" id="SM00389">
    <property type="entry name" value="HOX"/>
    <property type="match status" value="1"/>
</dbReference>
<dbReference type="SUPFAM" id="SSF46689">
    <property type="entry name" value="Homeodomain-like"/>
    <property type="match status" value="1"/>
</dbReference>
<dbReference type="PROSITE" id="PS00027">
    <property type="entry name" value="HOMEOBOX_1"/>
    <property type="match status" value="1"/>
</dbReference>
<dbReference type="PROSITE" id="PS50071">
    <property type="entry name" value="HOMEOBOX_2"/>
    <property type="match status" value="1"/>
</dbReference>